<protein>
    <recommendedName>
        <fullName>Uncharacterized protein MTH_564</fullName>
    </recommendedName>
</protein>
<evidence type="ECO:0000305" key="1"/>
<feature type="chain" id="PRO_0000107474" description="Uncharacterized protein MTH_564">
    <location>
        <begin position="1"/>
        <end position="246"/>
    </location>
</feature>
<dbReference type="EMBL" id="AE000666">
    <property type="protein sequence ID" value="AAB85070.1"/>
    <property type="molecule type" value="Genomic_DNA"/>
</dbReference>
<dbReference type="PIR" id="F69174">
    <property type="entry name" value="F69174"/>
</dbReference>
<dbReference type="SMR" id="O26664"/>
<dbReference type="FunCoup" id="O26664">
    <property type="interactions" value="2"/>
</dbReference>
<dbReference type="STRING" id="187420.MTH_564"/>
<dbReference type="PaxDb" id="187420-MTH_564"/>
<dbReference type="EnsemblBacteria" id="AAB85070">
    <property type="protein sequence ID" value="AAB85070"/>
    <property type="gene ID" value="MTH_564"/>
</dbReference>
<dbReference type="KEGG" id="mth:MTH_564"/>
<dbReference type="PATRIC" id="fig|187420.15.peg.544"/>
<dbReference type="HOGENOM" id="CLU_1149814_0_0_2"/>
<dbReference type="InParanoid" id="O26664"/>
<dbReference type="Proteomes" id="UP000005223">
    <property type="component" value="Chromosome"/>
</dbReference>
<dbReference type="InterPro" id="IPR012021">
    <property type="entry name" value="UCP005278"/>
</dbReference>
<dbReference type="PIRSF" id="PIRSF005278">
    <property type="entry name" value="UCP005278"/>
    <property type="match status" value="1"/>
</dbReference>
<sequence length="246" mass="25576">MIVLKITSIGADISDNDTSCSRELIASLEASIPGLLDAGAESAALTNITGDDVVISAFVEDDMLETVNRAIVEILRDSSESLGDLEGISDEPDGAGEGISYAEAAVRQDRYPDAVILAFDTYGGEDFVADVANSAIAAARGMDGVTDVSQEIRPGVREIPGVGYVSDKTDDPVVAATIEDIESVGVAAGAMLGAALGHKNVHLVRRGSPSYVIPGSVIVSATAFLNGNLIDLAVPFEERTRILRVL</sequence>
<accession>O26664</accession>
<gene>
    <name type="ordered locus">MTH_564</name>
</gene>
<name>Y564_METTH</name>
<proteinExistence type="predicted"/>
<reference key="1">
    <citation type="journal article" date="1997" name="J. Bacteriol.">
        <title>Complete genome sequence of Methanobacterium thermoautotrophicum deltaH: functional analysis and comparative genomics.</title>
        <authorList>
            <person name="Smith D.R."/>
            <person name="Doucette-Stamm L.A."/>
            <person name="Deloughery C."/>
            <person name="Lee H.-M."/>
            <person name="Dubois J."/>
            <person name="Aldredge T."/>
            <person name="Bashirzadeh R."/>
            <person name="Blakely D."/>
            <person name="Cook R."/>
            <person name="Gilbert K."/>
            <person name="Harrison D."/>
            <person name="Hoang L."/>
            <person name="Keagle P."/>
            <person name="Lumm W."/>
            <person name="Pothier B."/>
            <person name="Qiu D."/>
            <person name="Spadafora R."/>
            <person name="Vicare R."/>
            <person name="Wang Y."/>
            <person name="Wierzbowski J."/>
            <person name="Gibson R."/>
            <person name="Jiwani N."/>
            <person name="Caruso A."/>
            <person name="Bush D."/>
            <person name="Safer H."/>
            <person name="Patwell D."/>
            <person name="Prabhakar S."/>
            <person name="McDougall S."/>
            <person name="Shimer G."/>
            <person name="Goyal A."/>
            <person name="Pietrovski S."/>
            <person name="Church G.M."/>
            <person name="Daniels C.J."/>
            <person name="Mao J.-I."/>
            <person name="Rice P."/>
            <person name="Noelling J."/>
            <person name="Reeve J.N."/>
        </authorList>
    </citation>
    <scope>NUCLEOTIDE SEQUENCE [LARGE SCALE GENOMIC DNA]</scope>
    <source>
        <strain>ATCC 29096 / DSM 1053 / JCM 10044 / NBRC 100330 / Delta H</strain>
    </source>
</reference>
<organism>
    <name type="scientific">Methanothermobacter thermautotrophicus (strain ATCC 29096 / DSM 1053 / JCM 10044 / NBRC 100330 / Delta H)</name>
    <name type="common">Methanobacterium thermoautotrophicum</name>
    <dbReference type="NCBI Taxonomy" id="187420"/>
    <lineage>
        <taxon>Archaea</taxon>
        <taxon>Methanobacteriati</taxon>
        <taxon>Methanobacteriota</taxon>
        <taxon>Methanomada group</taxon>
        <taxon>Methanobacteria</taxon>
        <taxon>Methanobacteriales</taxon>
        <taxon>Methanobacteriaceae</taxon>
        <taxon>Methanothermobacter</taxon>
    </lineage>
</organism>
<keyword id="KW-1185">Reference proteome</keyword>
<comment type="similarity">
    <text evidence="1">To M.jannaschii MJ1676.</text>
</comment>